<comment type="function">
    <text evidence="2 6 7">Acts as an actin nucleation factor, remains associated with the slow-growing pointed end of the new filament (PubMed:21620703, PubMed:21983562). Involved in intracellular vesicle transport along actin fibers, providing a novel link between actin cytoskeleton dynamics and intracellular transport (PubMed:21983562). Required for asymmetric spindle positioning and asymmetric cell division during oocyte meiosis (PubMed:21620703). Required for normal formation of the cleavage furrow and for polar body extrusion during female germ cell meiosis (PubMed:21620703). Also acts in the nucleus: together with SPIRE1 and SPIRE2, promotes assembly of nuclear actin filaments in response to DNA damage in order to facilitate movement of chromatin and repair factors after DNA damage (By similarity).</text>
</comment>
<comment type="subcellular location">
    <subcellularLocation>
        <location evidence="7">Cytoplasm</location>
        <location evidence="7">Cytoskeleton</location>
    </subcellularLocation>
    <subcellularLocation>
        <location evidence="7">Cytoplasm</location>
        <location evidence="7">Cytosol</location>
    </subcellularLocation>
    <subcellularLocation>
        <location evidence="7">Cell membrane</location>
        <topology evidence="7">Peripheral membrane protein</topology>
        <orientation evidence="7">Cytoplasmic side</orientation>
    </subcellularLocation>
    <subcellularLocation>
        <location evidence="7">Cytoplasmic vesicle membrane</location>
        <topology evidence="7">Peripheral membrane protein</topology>
        <orientation evidence="7">Cytoplasmic side</orientation>
    </subcellularLocation>
    <text evidence="6">Detected at the cleavage furrow during asymmetric oocyte division and polar body extrusion.</text>
</comment>
<comment type="alternative products">
    <event type="alternative splicing"/>
    <isoform>
        <id>Q8K1S6-1</id>
        <name>1</name>
        <sequence type="displayed"/>
    </isoform>
    <isoform>
        <id>Q8K1S6-2</id>
        <name>2</name>
        <sequence type="described" ref="VSP_031573"/>
    </isoform>
</comment>
<comment type="tissue specificity">
    <text evidence="6">Detected in oocytes.</text>
</comment>
<comment type="domain">
    <text evidence="3">Binds to actin monomers via the WH2 domain.</text>
</comment>
<comment type="domain">
    <text evidence="1">The Spir-box targets binding to intracellular membrane structures.</text>
</comment>
<comment type="similarity">
    <text evidence="9">Belongs to the spire family.</text>
</comment>
<name>SPIR2_MOUSE</name>
<keyword id="KW-0009">Actin-binding</keyword>
<keyword id="KW-0025">Alternative splicing</keyword>
<keyword id="KW-1003">Cell membrane</keyword>
<keyword id="KW-0963">Cytoplasm</keyword>
<keyword id="KW-0968">Cytoplasmic vesicle</keyword>
<keyword id="KW-0206">Cytoskeleton</keyword>
<keyword id="KW-0472">Membrane</keyword>
<keyword id="KW-0597">Phosphoprotein</keyword>
<keyword id="KW-0653">Protein transport</keyword>
<keyword id="KW-1185">Reference proteome</keyword>
<keyword id="KW-0677">Repeat</keyword>
<keyword id="KW-0813">Transport</keyword>
<proteinExistence type="evidence at protein level"/>
<accession>Q8K1S6</accession>
<accession>Q8R0R2</accession>
<gene>
    <name type="primary">Spire2</name>
    <name type="synonym">spir-2</name>
</gene>
<feature type="chain" id="PRO_0000320024" description="Protein spire homolog 2">
    <location>
        <begin position="1"/>
        <end position="718"/>
    </location>
</feature>
<feature type="domain" description="KIND" evidence="4">
    <location>
        <begin position="26"/>
        <end position="207"/>
    </location>
</feature>
<feature type="domain" description="WH2 1">
    <location>
        <begin position="251"/>
        <end position="265"/>
    </location>
</feature>
<feature type="domain" description="WH2 2">
    <location>
        <begin position="281"/>
        <end position="299"/>
    </location>
</feature>
<feature type="domain" description="WH2 3">
    <location>
        <begin position="345"/>
        <end position="362"/>
    </location>
</feature>
<feature type="region of interest" description="Disordered" evidence="5">
    <location>
        <begin position="1"/>
        <end position="22"/>
    </location>
</feature>
<feature type="region of interest" description="Disordered" evidence="5">
    <location>
        <begin position="143"/>
        <end position="166"/>
    </location>
</feature>
<feature type="region of interest" description="Disordered" evidence="5">
    <location>
        <begin position="397"/>
        <end position="434"/>
    </location>
</feature>
<feature type="region of interest" description="Disordered" evidence="5">
    <location>
        <begin position="456"/>
        <end position="518"/>
    </location>
</feature>
<feature type="region of interest" description="Spir-box">
    <location>
        <begin position="538"/>
        <end position="558"/>
    </location>
</feature>
<feature type="compositionally biased region" description="Low complexity" evidence="5">
    <location>
        <begin position="10"/>
        <end position="21"/>
    </location>
</feature>
<feature type="compositionally biased region" description="Acidic residues" evidence="5">
    <location>
        <begin position="419"/>
        <end position="432"/>
    </location>
</feature>
<feature type="compositionally biased region" description="Low complexity" evidence="5">
    <location>
        <begin position="496"/>
        <end position="513"/>
    </location>
</feature>
<feature type="modified residue" description="Phosphoserine" evidence="10">
    <location>
        <position position="374"/>
    </location>
</feature>
<feature type="modified residue" description="Phosphoserine" evidence="2">
    <location>
        <position position="443"/>
    </location>
</feature>
<feature type="modified residue" description="Phosphoserine" evidence="2">
    <location>
        <position position="445"/>
    </location>
</feature>
<feature type="modified residue" description="Phosphoserine" evidence="2">
    <location>
        <position position="479"/>
    </location>
</feature>
<feature type="splice variant" id="VSP_031573" description="In isoform 2." evidence="8">
    <location>
        <begin position="1"/>
        <end position="100"/>
    </location>
</feature>
<reference key="1">
    <citation type="submission" date="2002-04" db="EMBL/GenBank/DDBJ databases">
        <title>The Spir protein family.</title>
        <authorList>
            <person name="Kerkhoff E."/>
            <person name="Leberfinger C.B."/>
            <person name="Borawski J.M."/>
            <person name="Rapp U.R."/>
            <person name="Doerks T."/>
            <person name="Bork P."/>
        </authorList>
    </citation>
    <scope>NUCLEOTIDE SEQUENCE [GENOMIC DNA] (ISOFORM 1)</scope>
    <source>
        <strain>C57BL/6J</strain>
        <tissue>Brain</tissue>
        <tissue>Colon</tissue>
        <tissue>Eye</tissue>
    </source>
</reference>
<reference key="2">
    <citation type="journal article" date="2004" name="Genome Res.">
        <title>The status, quality, and expansion of the NIH full-length cDNA project: the Mammalian Gene Collection (MGC).</title>
        <authorList>
            <consortium name="The MGC Project Team"/>
        </authorList>
    </citation>
    <scope>NUCLEOTIDE SEQUENCE [LARGE SCALE MRNA] (ISOFORMS 1 AND 2)</scope>
    <source>
        <tissue>Eye</tissue>
        <tissue>Olfactory epithelium</tissue>
    </source>
</reference>
<reference key="3">
    <citation type="journal article" date="2004" name="Gene Expr. Patterns">
        <title>Overlapping expression pattern of the actin organizers Spir-1 and formin-2 in the developing mouse nervous system and the adult brain.</title>
        <authorList>
            <person name="Schumacher N."/>
            <person name="Borawski J.M."/>
            <person name="Leberfinger C.B."/>
            <person name="Gessler M."/>
            <person name="Kerkhoff E."/>
        </authorList>
    </citation>
    <scope>SPIRE FAMILY</scope>
</reference>
<reference key="4">
    <citation type="journal article" date="2010" name="Cell">
        <title>A tissue-specific atlas of mouse protein phosphorylation and expression.</title>
        <authorList>
            <person name="Huttlin E.L."/>
            <person name="Jedrychowski M.P."/>
            <person name="Elias J.E."/>
            <person name="Goswami T."/>
            <person name="Rad R."/>
            <person name="Beausoleil S.A."/>
            <person name="Villen J."/>
            <person name="Haas W."/>
            <person name="Sowa M.E."/>
            <person name="Gygi S.P."/>
        </authorList>
    </citation>
    <scope>PHOSPHORYLATION [LARGE SCALE ANALYSIS] AT SER-374</scope>
    <scope>IDENTIFICATION BY MASS SPECTROMETRY [LARGE SCALE ANALYSIS]</scope>
    <source>
        <tissue>Testis</tissue>
    </source>
</reference>
<reference key="5">
    <citation type="journal article" date="2011" name="Curr. Biol.">
        <title>Spire-type actin nucleators cooperate with Formin-2 to drive asymmetric oocyte division.</title>
        <authorList>
            <person name="Pfender S."/>
            <person name="Kuznetsov V."/>
            <person name="Pleiser S."/>
            <person name="Kerkhoff E."/>
            <person name="Schuh M."/>
        </authorList>
    </citation>
    <scope>FUNCTION</scope>
    <scope>SUBCELLULAR LOCATION</scope>
    <scope>TISSUE SPECIFICITY</scope>
</reference>
<reference key="6">
    <citation type="journal article" date="2011" name="Nat. Cell Biol.">
        <title>An actin-dependent mechanism for long-range vesicle transport.</title>
        <authorList>
            <person name="Schuh M."/>
        </authorList>
    </citation>
    <scope>FUNCTION</scope>
    <scope>SUBCELLULAR LOCATION</scope>
</reference>
<evidence type="ECO:0000250" key="1">
    <source>
        <dbReference type="UniProtKB" id="Q08AE8"/>
    </source>
</evidence>
<evidence type="ECO:0000250" key="2">
    <source>
        <dbReference type="UniProtKB" id="Q8WWL2"/>
    </source>
</evidence>
<evidence type="ECO:0000250" key="3">
    <source>
        <dbReference type="UniProtKB" id="Q9U1K1"/>
    </source>
</evidence>
<evidence type="ECO:0000255" key="4">
    <source>
        <dbReference type="PROSITE-ProRule" id="PRU00709"/>
    </source>
</evidence>
<evidence type="ECO:0000256" key="5">
    <source>
        <dbReference type="SAM" id="MobiDB-lite"/>
    </source>
</evidence>
<evidence type="ECO:0000269" key="6">
    <source>
    </source>
</evidence>
<evidence type="ECO:0000269" key="7">
    <source>
    </source>
</evidence>
<evidence type="ECO:0000303" key="8">
    <source>
    </source>
</evidence>
<evidence type="ECO:0000305" key="9"/>
<evidence type="ECO:0007744" key="10">
    <source>
    </source>
</evidence>
<protein>
    <recommendedName>
        <fullName>Protein spire homolog 2</fullName>
        <shortName>Spir-2</shortName>
    </recommendedName>
</protein>
<dbReference type="EMBL" id="AJ459115">
    <property type="protein sequence ID" value="CAD30509.1"/>
    <property type="molecule type" value="Genomic_DNA"/>
</dbReference>
<dbReference type="EMBL" id="BC026502">
    <property type="protein sequence ID" value="AAH26502.1"/>
    <property type="molecule type" value="mRNA"/>
</dbReference>
<dbReference type="EMBL" id="BC049152">
    <property type="protein sequence ID" value="AAH49152.1"/>
    <property type="molecule type" value="mRNA"/>
</dbReference>
<dbReference type="CCDS" id="CCDS22754.1">
    <molecule id="Q8K1S6-1"/>
</dbReference>
<dbReference type="RefSeq" id="NP_758491.1">
    <molecule id="Q8K1S6-1"/>
    <property type="nucleotide sequence ID" value="NM_172287.2"/>
</dbReference>
<dbReference type="SMR" id="Q8K1S6"/>
<dbReference type="BioGRID" id="231590">
    <property type="interactions" value="33"/>
</dbReference>
<dbReference type="FunCoup" id="Q8K1S6">
    <property type="interactions" value="282"/>
</dbReference>
<dbReference type="IntAct" id="Q8K1S6">
    <property type="interactions" value="32"/>
</dbReference>
<dbReference type="STRING" id="10090.ENSMUSP00000010298"/>
<dbReference type="iPTMnet" id="Q8K1S6"/>
<dbReference type="PhosphoSitePlus" id="Q8K1S6"/>
<dbReference type="PaxDb" id="10090-ENSMUSP00000010298"/>
<dbReference type="ProteomicsDB" id="261618">
    <molecule id="Q8K1S6-1"/>
</dbReference>
<dbReference type="ProteomicsDB" id="261619">
    <molecule id="Q8K1S6-2"/>
</dbReference>
<dbReference type="Antibodypedia" id="45052">
    <property type="antibodies" value="128 antibodies from 20 providers"/>
</dbReference>
<dbReference type="Ensembl" id="ENSMUST00000010298.7">
    <molecule id="Q8K1S6-1"/>
    <property type="protein sequence ID" value="ENSMUSP00000010298.7"/>
    <property type="gene ID" value="ENSMUSG00000010154.8"/>
</dbReference>
<dbReference type="Ensembl" id="ENSMUST00000212404.2">
    <molecule id="Q8K1S6-2"/>
    <property type="protein sequence ID" value="ENSMUSP00000148710.2"/>
    <property type="gene ID" value="ENSMUSG00000010154.8"/>
</dbReference>
<dbReference type="GeneID" id="234857"/>
<dbReference type="KEGG" id="mmu:234857"/>
<dbReference type="UCSC" id="uc009nvj.1">
    <molecule id="Q8K1S6-1"/>
    <property type="organism name" value="mouse"/>
</dbReference>
<dbReference type="AGR" id="MGI:2446256"/>
<dbReference type="CTD" id="84501"/>
<dbReference type="MGI" id="MGI:2446256">
    <property type="gene designation" value="Spire2"/>
</dbReference>
<dbReference type="VEuPathDB" id="HostDB:ENSMUSG00000010154"/>
<dbReference type="eggNOG" id="ENOG502QQPN">
    <property type="taxonomic scope" value="Eukaryota"/>
</dbReference>
<dbReference type="GeneTree" id="ENSGT00390000003058"/>
<dbReference type="HOGENOM" id="CLU_018839_1_1_1"/>
<dbReference type="InParanoid" id="Q8K1S6"/>
<dbReference type="OMA" id="IPHACSG"/>
<dbReference type="OrthoDB" id="10043757at2759"/>
<dbReference type="PhylomeDB" id="Q8K1S6"/>
<dbReference type="TreeFam" id="TF326239"/>
<dbReference type="BioGRID-ORCS" id="234857">
    <property type="hits" value="5 hits in 77 CRISPR screens"/>
</dbReference>
<dbReference type="PRO" id="PR:Q8K1S6"/>
<dbReference type="Proteomes" id="UP000000589">
    <property type="component" value="Chromosome 8"/>
</dbReference>
<dbReference type="RNAct" id="Q8K1S6">
    <property type="molecule type" value="protein"/>
</dbReference>
<dbReference type="Bgee" id="ENSMUSG00000010154">
    <property type="expression patterns" value="Expressed in forebrain ventricular layer and 162 other cell types or tissues"/>
</dbReference>
<dbReference type="GO" id="GO:0005938">
    <property type="term" value="C:cell cortex"/>
    <property type="evidence" value="ECO:0000314"/>
    <property type="project" value="UniProtKB"/>
</dbReference>
<dbReference type="GO" id="GO:0030659">
    <property type="term" value="C:cytoplasmic vesicle membrane"/>
    <property type="evidence" value="ECO:0000314"/>
    <property type="project" value="UniProtKB"/>
</dbReference>
<dbReference type="GO" id="GO:0005856">
    <property type="term" value="C:cytoskeleton"/>
    <property type="evidence" value="ECO:0007669"/>
    <property type="project" value="UniProtKB-SubCell"/>
</dbReference>
<dbReference type="GO" id="GO:0005829">
    <property type="term" value="C:cytosol"/>
    <property type="evidence" value="ECO:0007669"/>
    <property type="project" value="UniProtKB-SubCell"/>
</dbReference>
<dbReference type="GO" id="GO:0005886">
    <property type="term" value="C:plasma membrane"/>
    <property type="evidence" value="ECO:0007669"/>
    <property type="project" value="UniProtKB-SubCell"/>
</dbReference>
<dbReference type="GO" id="GO:0003779">
    <property type="term" value="F:actin binding"/>
    <property type="evidence" value="ECO:0007669"/>
    <property type="project" value="UniProtKB-KW"/>
</dbReference>
<dbReference type="GO" id="GO:0030036">
    <property type="term" value="P:actin cytoskeleton organization"/>
    <property type="evidence" value="ECO:0000315"/>
    <property type="project" value="UniProtKB"/>
</dbReference>
<dbReference type="GO" id="GO:0045010">
    <property type="term" value="P:actin nucleation"/>
    <property type="evidence" value="ECO:0007669"/>
    <property type="project" value="InterPro"/>
</dbReference>
<dbReference type="GO" id="GO:0036089">
    <property type="term" value="P:cleavage furrow formation"/>
    <property type="evidence" value="ECO:0000315"/>
    <property type="project" value="UniProtKB"/>
</dbReference>
<dbReference type="GO" id="GO:0051295">
    <property type="term" value="P:establishment of meiotic spindle localization"/>
    <property type="evidence" value="ECO:0000315"/>
    <property type="project" value="UniProtKB"/>
</dbReference>
<dbReference type="GO" id="GO:0070649">
    <property type="term" value="P:formin-nucleated actin cable assembly"/>
    <property type="evidence" value="ECO:0000315"/>
    <property type="project" value="UniProtKB"/>
</dbReference>
<dbReference type="GO" id="GO:0046907">
    <property type="term" value="P:intracellular transport"/>
    <property type="evidence" value="ECO:0000315"/>
    <property type="project" value="UniProtKB"/>
</dbReference>
<dbReference type="GO" id="GO:0040038">
    <property type="term" value="P:polar body extrusion after meiotic divisions"/>
    <property type="evidence" value="ECO:0000315"/>
    <property type="project" value="UniProtKB"/>
</dbReference>
<dbReference type="GO" id="GO:2000781">
    <property type="term" value="P:positive regulation of double-strand break repair"/>
    <property type="evidence" value="ECO:0000250"/>
    <property type="project" value="UniProtKB"/>
</dbReference>
<dbReference type="GO" id="GO:0015031">
    <property type="term" value="P:protein transport"/>
    <property type="evidence" value="ECO:0007669"/>
    <property type="project" value="UniProtKB-KW"/>
</dbReference>
<dbReference type="GO" id="GO:0016192">
    <property type="term" value="P:vesicle-mediated transport"/>
    <property type="evidence" value="ECO:0000315"/>
    <property type="project" value="UniProtKB"/>
</dbReference>
<dbReference type="CDD" id="cd15768">
    <property type="entry name" value="FYVE_SPIR2"/>
    <property type="match status" value="1"/>
</dbReference>
<dbReference type="CDD" id="cd22186">
    <property type="entry name" value="WH2_Spire1-2_r3"/>
    <property type="match status" value="1"/>
</dbReference>
<dbReference type="CDD" id="cd22079">
    <property type="entry name" value="WH2_Spire2_r2"/>
    <property type="match status" value="1"/>
</dbReference>
<dbReference type="CDD" id="cd22081">
    <property type="entry name" value="WH2_Spire2_r4"/>
    <property type="match status" value="1"/>
</dbReference>
<dbReference type="CDD" id="cd22065">
    <property type="entry name" value="WH2_Spire_1-2_r1"/>
    <property type="match status" value="1"/>
</dbReference>
<dbReference type="FunFam" id="1.10.510.10:FF:000455">
    <property type="entry name" value="protein spire homolog 1 isoform X1"/>
    <property type="match status" value="1"/>
</dbReference>
<dbReference type="Gene3D" id="1.10.510.10">
    <property type="entry name" value="Transferase(Phosphotransferase) domain 1"/>
    <property type="match status" value="1"/>
</dbReference>
<dbReference type="InterPro" id="IPR011019">
    <property type="entry name" value="KIND_dom"/>
</dbReference>
<dbReference type="InterPro" id="IPR029901">
    <property type="entry name" value="Spire"/>
</dbReference>
<dbReference type="InterPro" id="IPR011011">
    <property type="entry name" value="Znf_FYVE_PHD"/>
</dbReference>
<dbReference type="PANTHER" id="PTHR21345:SF5">
    <property type="entry name" value="PROTEIN SPIRE HOMOLOG 2"/>
    <property type="match status" value="1"/>
</dbReference>
<dbReference type="PANTHER" id="PTHR21345">
    <property type="entry name" value="SPIRE"/>
    <property type="match status" value="1"/>
</dbReference>
<dbReference type="Pfam" id="PF16474">
    <property type="entry name" value="KIND"/>
    <property type="match status" value="1"/>
</dbReference>
<dbReference type="SMART" id="SM00750">
    <property type="entry name" value="KIND"/>
    <property type="match status" value="1"/>
</dbReference>
<dbReference type="SUPFAM" id="SSF57903">
    <property type="entry name" value="FYVE/PHD zinc finger"/>
    <property type="match status" value="1"/>
</dbReference>
<dbReference type="PROSITE" id="PS51377">
    <property type="entry name" value="KIND"/>
    <property type="match status" value="1"/>
</dbReference>
<dbReference type="PROSITE" id="PS51082">
    <property type="entry name" value="WH2"/>
    <property type="match status" value="2"/>
</dbReference>
<organism>
    <name type="scientific">Mus musculus</name>
    <name type="common">Mouse</name>
    <dbReference type="NCBI Taxonomy" id="10090"/>
    <lineage>
        <taxon>Eukaryota</taxon>
        <taxon>Metazoa</taxon>
        <taxon>Chordata</taxon>
        <taxon>Craniata</taxon>
        <taxon>Vertebrata</taxon>
        <taxon>Euteleostomi</taxon>
        <taxon>Mammalia</taxon>
        <taxon>Eutheria</taxon>
        <taxon>Euarchontoglires</taxon>
        <taxon>Glires</taxon>
        <taxon>Rodentia</taxon>
        <taxon>Myomorpha</taxon>
        <taxon>Muroidea</taxon>
        <taxon>Muridae</taxon>
        <taxon>Murinae</taxon>
        <taxon>Mus</taxon>
        <taxon>Mus</taxon>
    </lineage>
</organism>
<sequence length="718" mass="80210">MARAGGGGAAAPERAGGAARPEPWELSLEEVLKVYEQPINEEQAWAVCFQGCRGLRGEPGGVRRIRDTADILLRRDGSVGARLEPEPTTMVVPPASSEAQMVQSLGFAIYRALDWGLDENEERELSPQLERLIDLMANSDCEDSSCGAADEGYVGPEEEEEAEGGPRAVRTFAQAMRLCALRLTDPHGAQAHYQAVCRALFVETLELRAFLARVREAKEMLKKLGEEEPREKPLAELDHLGHTDWARLWVQLMRELRHGVKLKKVQEKEFNPLPTEFQLTPFEMLMQDIRARNYKLRKVMVDGDIPPRVKKDAHELILDFIRSRPPLKQVSERQLRPVPQKQRTLHEKILEEIKQERRLRPVGAQHLGGRGFGSLPCILNACSGDIKSTSCINLSVTDTGSGSQRPRPRVLLKAPTLAEMEEMNTSEEEESPCGEVALKRDRSFSEHDLAQLRSEMASGLQSAAQPPGGTEPPRARAGSMHSWRPSSRDQGFCPVSGQSQPLPSSALPSSLSSVDGPEAASPDTRHLWLEFSHPVESLALTVEEVVDVRRVLVKAEMERFLQDKELFSSLKRGKICCCCRAKFPLFSWPPTCLFCKRAVCTSCSVKMKMPSKKYGHIPVYTLGFESLQRVPTTKATPTLRRDAFQSLQGPKWRSVEEEFPHIYAHGCVLKDVCSDCTSFVADVVCSSRKSVDVLNATPRRSRQTQSLYIPNTRTLNFQ</sequence>